<sequence>MTKSELIELLIDQQSHLPVKDVEQAIKAMLEHMSDSLANGERIEIRGFGSFSLHYRAPRIGRNPKTGESVELSAKYVPHFKPGKELRELVNLPENSEINELN</sequence>
<protein>
    <recommendedName>
        <fullName evidence="1">Integration host factor subunit beta</fullName>
        <shortName evidence="1">IHF-beta</shortName>
    </recommendedName>
</protein>
<gene>
    <name evidence="1" type="primary">ihfB</name>
    <name evidence="1" type="synonym">himD</name>
    <name type="ordered locus">Mmwyl1_3223</name>
</gene>
<organism>
    <name type="scientific">Marinomonas sp. (strain MWYL1)</name>
    <dbReference type="NCBI Taxonomy" id="400668"/>
    <lineage>
        <taxon>Bacteria</taxon>
        <taxon>Pseudomonadati</taxon>
        <taxon>Pseudomonadota</taxon>
        <taxon>Gammaproteobacteria</taxon>
        <taxon>Oceanospirillales</taxon>
        <taxon>Oceanospirillaceae</taxon>
        <taxon>Marinomonas</taxon>
    </lineage>
</organism>
<proteinExistence type="inferred from homology"/>
<reference key="1">
    <citation type="submission" date="2007-06" db="EMBL/GenBank/DDBJ databases">
        <title>Complete sequence of Marinomonas sp. MWYL1.</title>
        <authorList>
            <consortium name="US DOE Joint Genome Institute"/>
            <person name="Copeland A."/>
            <person name="Lucas S."/>
            <person name="Lapidus A."/>
            <person name="Barry K."/>
            <person name="Glavina del Rio T."/>
            <person name="Dalin E."/>
            <person name="Tice H."/>
            <person name="Pitluck S."/>
            <person name="Kiss H."/>
            <person name="Brettin T."/>
            <person name="Bruce D."/>
            <person name="Detter J.C."/>
            <person name="Han C."/>
            <person name="Schmutz J."/>
            <person name="Larimer F."/>
            <person name="Land M."/>
            <person name="Hauser L."/>
            <person name="Kyrpides N."/>
            <person name="Kim E."/>
            <person name="Johnston A.W.B."/>
            <person name="Todd J.D."/>
            <person name="Rogers R."/>
            <person name="Wexler M."/>
            <person name="Bond P.L."/>
            <person name="Li Y."/>
            <person name="Richardson P."/>
        </authorList>
    </citation>
    <scope>NUCLEOTIDE SEQUENCE [LARGE SCALE GENOMIC DNA]</scope>
    <source>
        <strain>MWYL1</strain>
    </source>
</reference>
<dbReference type="EMBL" id="CP000749">
    <property type="protein sequence ID" value="ABR72129.1"/>
    <property type="molecule type" value="Genomic_DNA"/>
</dbReference>
<dbReference type="SMR" id="A6W0A0"/>
<dbReference type="STRING" id="400668.Mmwyl1_3223"/>
<dbReference type="KEGG" id="mmw:Mmwyl1_3223"/>
<dbReference type="eggNOG" id="COG0776">
    <property type="taxonomic scope" value="Bacteria"/>
</dbReference>
<dbReference type="HOGENOM" id="CLU_105066_2_0_6"/>
<dbReference type="OrthoDB" id="9804203at2"/>
<dbReference type="GO" id="GO:0005694">
    <property type="term" value="C:chromosome"/>
    <property type="evidence" value="ECO:0007669"/>
    <property type="project" value="InterPro"/>
</dbReference>
<dbReference type="GO" id="GO:0005829">
    <property type="term" value="C:cytosol"/>
    <property type="evidence" value="ECO:0007669"/>
    <property type="project" value="TreeGrafter"/>
</dbReference>
<dbReference type="GO" id="GO:0003677">
    <property type="term" value="F:DNA binding"/>
    <property type="evidence" value="ECO:0007669"/>
    <property type="project" value="UniProtKB-UniRule"/>
</dbReference>
<dbReference type="GO" id="GO:0030527">
    <property type="term" value="F:structural constituent of chromatin"/>
    <property type="evidence" value="ECO:0007669"/>
    <property type="project" value="InterPro"/>
</dbReference>
<dbReference type="GO" id="GO:0006310">
    <property type="term" value="P:DNA recombination"/>
    <property type="evidence" value="ECO:0007669"/>
    <property type="project" value="UniProtKB-UniRule"/>
</dbReference>
<dbReference type="GO" id="GO:0006355">
    <property type="term" value="P:regulation of DNA-templated transcription"/>
    <property type="evidence" value="ECO:0007669"/>
    <property type="project" value="UniProtKB-UniRule"/>
</dbReference>
<dbReference type="GO" id="GO:0006417">
    <property type="term" value="P:regulation of translation"/>
    <property type="evidence" value="ECO:0007669"/>
    <property type="project" value="UniProtKB-UniRule"/>
</dbReference>
<dbReference type="CDD" id="cd13836">
    <property type="entry name" value="IHF_B"/>
    <property type="match status" value="1"/>
</dbReference>
<dbReference type="FunFam" id="4.10.520.10:FF:000003">
    <property type="entry name" value="Integration host factor subunit beta"/>
    <property type="match status" value="1"/>
</dbReference>
<dbReference type="Gene3D" id="4.10.520.10">
    <property type="entry name" value="IHF-like DNA-binding proteins"/>
    <property type="match status" value="1"/>
</dbReference>
<dbReference type="HAMAP" id="MF_00381">
    <property type="entry name" value="IHF_beta"/>
    <property type="match status" value="1"/>
</dbReference>
<dbReference type="InterPro" id="IPR000119">
    <property type="entry name" value="Hist_DNA-bd"/>
</dbReference>
<dbReference type="InterPro" id="IPR020816">
    <property type="entry name" value="Histone-like_DNA-bd_CS"/>
</dbReference>
<dbReference type="InterPro" id="IPR010992">
    <property type="entry name" value="IHF-like_DNA-bd_dom_sf"/>
</dbReference>
<dbReference type="InterPro" id="IPR005685">
    <property type="entry name" value="IHF_beta"/>
</dbReference>
<dbReference type="NCBIfam" id="TIGR00988">
    <property type="entry name" value="hip"/>
    <property type="match status" value="1"/>
</dbReference>
<dbReference type="NCBIfam" id="NF001222">
    <property type="entry name" value="PRK00199.1"/>
    <property type="match status" value="1"/>
</dbReference>
<dbReference type="PANTHER" id="PTHR33175">
    <property type="entry name" value="DNA-BINDING PROTEIN HU"/>
    <property type="match status" value="1"/>
</dbReference>
<dbReference type="PANTHER" id="PTHR33175:SF5">
    <property type="entry name" value="INTEGRATION HOST FACTOR SUBUNIT BETA"/>
    <property type="match status" value="1"/>
</dbReference>
<dbReference type="Pfam" id="PF00216">
    <property type="entry name" value="Bac_DNA_binding"/>
    <property type="match status" value="1"/>
</dbReference>
<dbReference type="PRINTS" id="PR01727">
    <property type="entry name" value="DNABINDINGHU"/>
</dbReference>
<dbReference type="SMART" id="SM00411">
    <property type="entry name" value="BHL"/>
    <property type="match status" value="1"/>
</dbReference>
<dbReference type="SUPFAM" id="SSF47729">
    <property type="entry name" value="IHF-like DNA-binding proteins"/>
    <property type="match status" value="1"/>
</dbReference>
<dbReference type="PROSITE" id="PS00045">
    <property type="entry name" value="HISTONE_LIKE"/>
    <property type="match status" value="1"/>
</dbReference>
<feature type="chain" id="PRO_1000080047" description="Integration host factor subunit beta">
    <location>
        <begin position="1"/>
        <end position="102"/>
    </location>
</feature>
<evidence type="ECO:0000255" key="1">
    <source>
        <dbReference type="HAMAP-Rule" id="MF_00381"/>
    </source>
</evidence>
<comment type="function">
    <text evidence="1">This protein is one of the two subunits of integration host factor, a specific DNA-binding protein that functions in genetic recombination as well as in transcriptional and translational control.</text>
</comment>
<comment type="subunit">
    <text evidence="1">Heterodimer of an alpha and a beta chain.</text>
</comment>
<comment type="similarity">
    <text evidence="1">Belongs to the bacterial histone-like protein family.</text>
</comment>
<name>IHFB_MARMS</name>
<accession>A6W0A0</accession>
<keyword id="KW-0233">DNA recombination</keyword>
<keyword id="KW-0238">DNA-binding</keyword>
<keyword id="KW-0804">Transcription</keyword>
<keyword id="KW-0805">Transcription regulation</keyword>
<keyword id="KW-0810">Translation regulation</keyword>